<sequence>MGDSTGEPGSSMHGVTGREQSFAFSVQSPIVHTDKTAKFDLPVDTEHKATVFKLFSFAKPHMRTFHLSWISFSTCFVSTFAAAPLVPIIRENLNLTKQDIGNAGVASVSGSIFSRLVMGAVCDLLGPRYGCAFLVMLSAPTVFSMSFVSDAAGFITVRFMIGFCLATFVSCQYWMSTMFNSQIIGLVNGTAAGWGNMGGGITQLLMPIVYEIIRRCGSTAFTAWRIAFFVPGWLHIIMGILVLNLGQDLPDGNRATLEKAGEVAKDKFGKILWYAVTNYRTWIFVLLYGYSMGVELSTDNVIAEYFFDRFHLKLHTAGLIAACFGMANFFARPAGGYASDFAAKYFGMRGRLWTLWIIQTAGGLFCVWLGRANTLVTAVVAMVLFSMGAQAACGATFAIVPFVSRRALGIISGLTGAGGNFGSGLTQLLFFSTSHFTTEQGLTWMGVMIVACTLPVTLVHFPQWGSMFLPPSTDPVKGTEAHYYGSEWNEQEKQKNMHQGSLRFAENAKSEGGRRVRSAATPPENTPNNV</sequence>
<proteinExistence type="evidence at protein level"/>
<name>NRT21_ARATH</name>
<accession>O82811</accession>
<keyword id="KW-1003">Cell membrane</keyword>
<keyword id="KW-0472">Membrane</keyword>
<keyword id="KW-0534">Nitrate assimilation</keyword>
<keyword id="KW-0597">Phosphoprotein</keyword>
<keyword id="KW-1185">Reference proteome</keyword>
<keyword id="KW-0812">Transmembrane</keyword>
<keyword id="KW-1133">Transmembrane helix</keyword>
<reference key="1">
    <citation type="submission" date="1997-06" db="EMBL/GenBank/DDBJ databases">
        <title>Cloning and characterisation of the NRT2 high affinity nitrate transporters from Arabidopsis.</title>
        <authorList>
            <person name="Zhang H."/>
            <person name="Forde B.G."/>
        </authorList>
    </citation>
    <scope>NUCLEOTIDE SEQUENCE [MRNA]</scope>
    <source>
        <strain>cv. Landsberg erecta</strain>
    </source>
</reference>
<reference key="2">
    <citation type="journal article" date="1999" name="Plant J.">
        <title>Regulation of a putative high-affinity nitrate transporter (Nrt2;1At) in roots of Arabidopsis thaliana.</title>
        <authorList>
            <person name="Zhuo D."/>
            <person name="Okamoto M."/>
            <person name="Vidmar J.J."/>
            <person name="Glass A.D."/>
        </authorList>
    </citation>
    <scope>NUCLEOTIDE SEQUENCE [MRNA]</scope>
    <scope>INDUCTION BY NITRATE AND AMMONIUM</scope>
    <scope>TISSUE SPECIFICITY</scope>
    <source>
        <strain>cv. Columbia</strain>
    </source>
</reference>
<reference key="3">
    <citation type="journal article" date="1998" name="Curr. Opin. Plant Biol.">
        <title>Nitrate transport: a key step in nitrate assimilation.</title>
        <authorList>
            <person name="Daniel-Vedele F."/>
            <person name="Filleur S."/>
            <person name="Caboche M."/>
        </authorList>
    </citation>
    <scope>NUCLEOTIDE SEQUENCE [MRNA]</scope>
    <source>
        <strain>cv. Landsberg erecta</strain>
    </source>
</reference>
<reference key="4">
    <citation type="journal article" date="1999" name="Planta">
        <title>Expression analysis of a high-affinity nitrate transporter isolated from Arabidopsis thaliana by differential display.</title>
        <authorList>
            <person name="Filleur S."/>
            <person name="Daniel-Vedele F."/>
        </authorList>
    </citation>
    <scope>NUCLEOTIDE SEQUENCE [MRNA]</scope>
    <source>
        <strain>cv. Landsberg erecta</strain>
    </source>
</reference>
<reference key="5">
    <citation type="journal article" date="2000" name="Nature">
        <title>Sequence and analysis of chromosome 1 of the plant Arabidopsis thaliana.</title>
        <authorList>
            <person name="Theologis A."/>
            <person name="Ecker J.R."/>
            <person name="Palm C.J."/>
            <person name="Federspiel N.A."/>
            <person name="Kaul S."/>
            <person name="White O."/>
            <person name="Alonso J."/>
            <person name="Altafi H."/>
            <person name="Araujo R."/>
            <person name="Bowman C.L."/>
            <person name="Brooks S.Y."/>
            <person name="Buehler E."/>
            <person name="Chan A."/>
            <person name="Chao Q."/>
            <person name="Chen H."/>
            <person name="Cheuk R.F."/>
            <person name="Chin C.W."/>
            <person name="Chung M.K."/>
            <person name="Conn L."/>
            <person name="Conway A.B."/>
            <person name="Conway A.R."/>
            <person name="Creasy T.H."/>
            <person name="Dewar K."/>
            <person name="Dunn P."/>
            <person name="Etgu P."/>
            <person name="Feldblyum T.V."/>
            <person name="Feng J.-D."/>
            <person name="Fong B."/>
            <person name="Fujii C.Y."/>
            <person name="Gill J.E."/>
            <person name="Goldsmith A.D."/>
            <person name="Haas B."/>
            <person name="Hansen N.F."/>
            <person name="Hughes B."/>
            <person name="Huizar L."/>
            <person name="Hunter J.L."/>
            <person name="Jenkins J."/>
            <person name="Johnson-Hopson C."/>
            <person name="Khan S."/>
            <person name="Khaykin E."/>
            <person name="Kim C.J."/>
            <person name="Koo H.L."/>
            <person name="Kremenetskaia I."/>
            <person name="Kurtz D.B."/>
            <person name="Kwan A."/>
            <person name="Lam B."/>
            <person name="Langin-Hooper S."/>
            <person name="Lee A."/>
            <person name="Lee J.M."/>
            <person name="Lenz C.A."/>
            <person name="Li J.H."/>
            <person name="Li Y.-P."/>
            <person name="Lin X."/>
            <person name="Liu S.X."/>
            <person name="Liu Z.A."/>
            <person name="Luros J.S."/>
            <person name="Maiti R."/>
            <person name="Marziali A."/>
            <person name="Militscher J."/>
            <person name="Miranda M."/>
            <person name="Nguyen M."/>
            <person name="Nierman W.C."/>
            <person name="Osborne B.I."/>
            <person name="Pai G."/>
            <person name="Peterson J."/>
            <person name="Pham P.K."/>
            <person name="Rizzo M."/>
            <person name="Rooney T."/>
            <person name="Rowley D."/>
            <person name="Sakano H."/>
            <person name="Salzberg S.L."/>
            <person name="Schwartz J.R."/>
            <person name="Shinn P."/>
            <person name="Southwick A.M."/>
            <person name="Sun H."/>
            <person name="Tallon L.J."/>
            <person name="Tambunga G."/>
            <person name="Toriumi M.J."/>
            <person name="Town C.D."/>
            <person name="Utterback T."/>
            <person name="Van Aken S."/>
            <person name="Vaysberg M."/>
            <person name="Vysotskaia V.S."/>
            <person name="Walker M."/>
            <person name="Wu D."/>
            <person name="Yu G."/>
            <person name="Fraser C.M."/>
            <person name="Venter J.C."/>
            <person name="Davis R.W."/>
        </authorList>
    </citation>
    <scope>NUCLEOTIDE SEQUENCE [LARGE SCALE GENOMIC DNA]</scope>
    <source>
        <strain>cv. Columbia</strain>
    </source>
</reference>
<reference key="6">
    <citation type="journal article" date="2017" name="Plant J.">
        <title>Araport11: a complete reannotation of the Arabidopsis thaliana reference genome.</title>
        <authorList>
            <person name="Cheng C.Y."/>
            <person name="Krishnakumar V."/>
            <person name="Chan A.P."/>
            <person name="Thibaud-Nissen F."/>
            <person name="Schobel S."/>
            <person name="Town C.D."/>
        </authorList>
    </citation>
    <scope>GENOME REANNOTATION</scope>
    <source>
        <strain>cv. Columbia</strain>
    </source>
</reference>
<reference key="7">
    <citation type="journal article" date="1999" name="Plant J.">
        <title>Molecular and functional regulation of two NO3- uptake systems by N- and C-status of Arabidopsis plants.</title>
        <authorList>
            <person name="Lejay L."/>
            <person name="Tillard P."/>
            <person name="Lepetit M."/>
            <person name="Olive F."/>
            <person name="Filleur S."/>
            <person name="Daniel-Vedele F."/>
            <person name="Gojon A."/>
        </authorList>
    </citation>
    <scope>INDUCTION BY NITRATE AND LIGHT</scope>
</reference>
<reference key="8">
    <citation type="journal article" date="2001" name="FEBS Lett.">
        <title>An arabidopsis T-DNA mutant affected in Nrt2 genes is impaired in nitrate uptake.</title>
        <authorList>
            <person name="Filleur S."/>
            <person name="Dorbe M.F."/>
            <person name="Cerezo M."/>
            <person name="Orsel M."/>
            <person name="Granier F."/>
            <person name="Gojon A."/>
            <person name="Daniel-Vedele F."/>
        </authorList>
    </citation>
    <scope>DISRUPTION PHENOTYPE</scope>
</reference>
<reference key="9">
    <citation type="journal article" date="2001" name="Plant Physiol.">
        <title>Major alterations of the regulation of root NO(3)(-) uptake are associated with the mutation of Nrt2.1 and Nrt2.2 genes in Arabidopsis.</title>
        <authorList>
            <person name="Cerezo M."/>
            <person name="Tillard P."/>
            <person name="Filleur S."/>
            <person name="Munos S."/>
            <person name="Daniel-Vedele F."/>
            <person name="Gojon A."/>
        </authorList>
    </citation>
    <scope>FUNCTION</scope>
</reference>
<reference key="10">
    <citation type="journal article" date="2002" name="J. Exp. Bot.">
        <title>Nitrate transport in plants: which gene and which control?</title>
        <authorList>
            <person name="Orsel M."/>
            <person name="Filleur S."/>
            <person name="Fraisier V."/>
            <person name="Daniel-Vedele F."/>
        </authorList>
    </citation>
    <scope>GENE FAMILY</scope>
</reference>
<reference key="11">
    <citation type="journal article" date="2003" name="Plant Cell Physiol.">
        <title>Regulation of NRT1 and NRT2 gene families of Arabidopsis thaliana: responses to nitrate provision.</title>
        <authorList>
            <person name="Okamoto M."/>
            <person name="Vidmar J.J."/>
            <person name="Glass A.D."/>
        </authorList>
    </citation>
    <scope>INDUCTION BY NITRATE</scope>
    <scope>GENE FAMILY</scope>
</reference>
<reference key="12">
    <citation type="journal article" date="2004" name="Planta">
        <title>Disruption of the nitrate transporter genes AtNRT2.1 and AtNRT2.2 restricts growth at low external nitrate concentration.</title>
        <authorList>
            <person name="Orsel M."/>
            <person name="Eulenburg K."/>
            <person name="Krapp A."/>
            <person name="Daniel-Vedele F."/>
        </authorList>
    </citation>
    <scope>FUNCTION</scope>
    <scope>INDUCTION BY NITRATE</scope>
</reference>
<reference key="13">
    <citation type="journal article" date="2005" name="Proc. Natl. Acad. Sci. U.S.A.">
        <title>The putative high-affinity nitrate transporter NRT2.1 represses lateral root initiation in response to nutritional cues.</title>
        <authorList>
            <person name="Little D.Y."/>
            <person name="Rao H."/>
            <person name="Oliva S."/>
            <person name="Daniel-Vedele F."/>
            <person name="Krapp A."/>
            <person name="Malamy J.E."/>
        </authorList>
    </citation>
    <scope>FUNCTION</scope>
    <scope>MUTAGENESIS OF GLY-119</scope>
    <scope>DISRUPTION PHENOTYPE</scope>
</reference>
<reference key="14">
    <citation type="journal article" date="2006" name="Plant Physiol.">
        <title>A central role for the nitrate transporter NRT2.1 in the integrated morphological and physiological responses of the root system to nitrogen limitation in Arabidopsis.</title>
        <authorList>
            <person name="Remans T."/>
            <person name="Nacry P."/>
            <person name="Pervent M."/>
            <person name="Girin T."/>
            <person name="Tillard P."/>
            <person name="Lepetit M."/>
            <person name="Gojon A."/>
        </authorList>
    </citation>
    <scope>FUNCTION</scope>
    <scope>TISSUE SPECIFICITY</scope>
</reference>
<reference key="15">
    <citation type="journal article" date="2006" name="Plant Physiol.">
        <title>High-affinity nitrate transport in roots of Arabidopsis depends on expression of the NAR2-like gene AtNRT3.1.</title>
        <authorList>
            <person name="Okamoto M."/>
            <person name="Kumar A."/>
            <person name="Li W."/>
            <person name="Wang Y."/>
            <person name="Siddiqi M.Y."/>
            <person name="Crawford N.M."/>
            <person name="Glass A.D."/>
        </authorList>
    </citation>
    <scope>INDUCTION BY NITRATE</scope>
</reference>
<reference key="16">
    <citation type="journal article" date="2006" name="Plant Physiol.">
        <title>Characterization of a two-component high-affinity nitrate uptake system in Arabidopsis. Physiology and protein-protein interaction.</title>
        <authorList>
            <person name="Orsel M."/>
            <person name="Chopin F."/>
            <person name="Leleu O."/>
            <person name="Smith S.J."/>
            <person name="Krapp A."/>
            <person name="Daniel-Vedele F."/>
            <person name="Miller A.J."/>
        </authorList>
    </citation>
    <scope>INTERACTION WITH NRT3.1</scope>
    <scope>INDUCTION</scope>
</reference>
<reference key="17">
    <citation type="journal article" date="2007" name="FEBS Lett.">
        <title>Nitrate transporters and peptide transporters.</title>
        <authorList>
            <person name="Tsay Y.F."/>
            <person name="Chiu C.C."/>
            <person name="Tsai C.B."/>
            <person name="Ho C.H."/>
            <person name="Hsu P.K."/>
        </authorList>
    </citation>
    <scope>GENE FAMILY</scope>
</reference>
<reference key="18">
    <citation type="journal article" date="2007" name="J. Biol. Chem.">
        <title>Regulation of root nitrate uptake at the NRT2.1 protein level in Arabidopsis thaliana.</title>
        <authorList>
            <person name="Wirth J."/>
            <person name="Chopin F."/>
            <person name="Santoni V."/>
            <person name="Viennois G."/>
            <person name="Tillard P."/>
            <person name="Krapp A."/>
            <person name="Lejay L."/>
            <person name="Daniel-Vedele F."/>
            <person name="Gojon A."/>
        </authorList>
    </citation>
    <scope>SUBCELLULAR LOCATION</scope>
    <scope>TISSUE SPECIFICITY</scope>
    <scope>INDUCTION BY LIGHT AND SUCROSE</scope>
</reference>
<reference key="19">
    <citation type="journal article" date="2007" name="Plant Cell">
        <title>The Arabidopsis ATNRT2.7 nitrate transporter controls nitrate content in seeds.</title>
        <authorList>
            <person name="Chopin F."/>
            <person name="Orsel M."/>
            <person name="Dorbe M.F."/>
            <person name="Chardon F."/>
            <person name="Truong H.N."/>
            <person name="Miller A.J."/>
            <person name="Krapp A."/>
            <person name="Daniel-Vedele F."/>
        </authorList>
    </citation>
    <scope>TISSUE SPECIFICITY</scope>
</reference>
<reference key="20">
    <citation type="journal article" date="2007" name="Plant Cell Environ.">
        <title>Identification of a 150 bp cis-acting element of the AtNRT2.1 promoter involved in the regulation of gene expression by the N and C status of the plant.</title>
        <authorList>
            <person name="Girin T."/>
            <person name="Lejay L."/>
            <person name="Wirth J."/>
            <person name="Widiez T."/>
            <person name="Palenchar P.M."/>
            <person name="Nazoa P."/>
            <person name="Touraine B."/>
            <person name="Gojon A."/>
            <person name="Lepetit M."/>
        </authorList>
    </citation>
    <scope>INDUCTION BY NITRATE AND SUCROSE</scope>
</reference>
<reference key="21">
    <citation type="journal article" date="2007" name="Plant Physiol.">
        <title>Dissection of the AtNRT2.1:AtNRT2.2 inducible high-affinity nitrate transporter gene cluster.</title>
        <authorList>
            <person name="Li W."/>
            <person name="Wang Y."/>
            <person name="Okamoto M."/>
            <person name="Crawford N.M."/>
            <person name="Siddiqi M.Y."/>
            <person name="Glass A.D."/>
        </authorList>
    </citation>
    <scope>FUNCTION</scope>
    <scope>DISRUPTION PHENOTYPE</scope>
</reference>
<reference key="22">
    <citation type="journal article" date="2007" name="Plant Physiol. Biochem.">
        <title>The Arabidopsis nitrate transporter AtNRT2.1 is targeted to the root plasma membrane.</title>
        <authorList>
            <person name="Chopin F."/>
            <person name="Wirth J."/>
            <person name="Dorbe M.F."/>
            <person name="Lejay L."/>
            <person name="Krapp A."/>
            <person name="Gojon A."/>
            <person name="Daniel-Vedele F."/>
        </authorList>
    </citation>
    <scope>SUBCELLULAR LOCATION</scope>
</reference>
<reference key="23">
    <citation type="journal article" date="2007" name="Plant Signal. Behav.">
        <title>Nitrate signaling and the two component high affinity uptake system in Arabidopsis.</title>
        <authorList>
            <person name="Orsel M."/>
            <person name="Chopin F."/>
            <person name="Leleu O."/>
            <person name="Smith S.J."/>
            <person name="Krapp A."/>
            <person name="Daniel-Vedele F."/>
            <person name="Miller A.J."/>
        </authorList>
    </citation>
    <scope>FUNCTION</scope>
    <scope>SUBCELLULAR LOCATION</scope>
</reference>
<reference key="24">
    <citation type="journal article" date="2010" name="Plant J.">
        <title>Characterization of an intact two-component high-affinity nitrate transporter from Arabidopsis roots.</title>
        <authorList>
            <person name="Yong Z."/>
            <person name="Kotur Z."/>
            <person name="Glass A.D."/>
        </authorList>
    </citation>
    <scope>SUBCELLULAR LOCATION</scope>
    <scope>SUBUNIT</scope>
    <scope>INTERACTION WITH NRT3.1</scope>
</reference>
<feature type="chain" id="PRO_0000400098" description="High-affinity nitrate transporter 2.1">
    <location>
        <begin position="1"/>
        <end position="530"/>
    </location>
</feature>
<feature type="transmembrane region" description="Helical" evidence="2">
    <location>
        <begin position="69"/>
        <end position="89"/>
    </location>
</feature>
<feature type="transmembrane region" description="Helical" evidence="2">
    <location>
        <begin position="105"/>
        <end position="125"/>
    </location>
</feature>
<feature type="transmembrane region" description="Helical" evidence="2">
    <location>
        <begin position="129"/>
        <end position="149"/>
    </location>
</feature>
<feature type="transmembrane region" description="Helical" evidence="2">
    <location>
        <begin position="151"/>
        <end position="171"/>
    </location>
</feature>
<feature type="transmembrane region" description="Helical" evidence="2">
    <location>
        <begin position="193"/>
        <end position="213"/>
    </location>
</feature>
<feature type="transmembrane region" description="Helical" evidence="2">
    <location>
        <begin position="226"/>
        <end position="246"/>
    </location>
</feature>
<feature type="transmembrane region" description="Helical" evidence="2">
    <location>
        <begin position="271"/>
        <end position="290"/>
    </location>
</feature>
<feature type="transmembrane region" description="Helical" evidence="2">
    <location>
        <begin position="310"/>
        <end position="330"/>
    </location>
</feature>
<feature type="transmembrane region" description="Helical" evidence="2">
    <location>
        <begin position="352"/>
        <end position="372"/>
    </location>
</feature>
<feature type="transmembrane region" description="Helical" evidence="2">
    <location>
        <begin position="383"/>
        <end position="403"/>
    </location>
</feature>
<feature type="transmembrane region" description="Helical" evidence="2">
    <location>
        <begin position="410"/>
        <end position="430"/>
    </location>
</feature>
<feature type="transmembrane region" description="Helical" evidence="2">
    <location>
        <begin position="441"/>
        <end position="461"/>
    </location>
</feature>
<feature type="region of interest" description="Disordered" evidence="3">
    <location>
        <begin position="490"/>
        <end position="530"/>
    </location>
</feature>
<feature type="modified residue" description="Phosphothreonine" evidence="1">
    <location>
        <position position="521"/>
    </location>
</feature>
<feature type="mutagenesis site" description="In lin1; reduced nitrate uptake and increased lateral root initiation." evidence="10">
    <original>G</original>
    <variation>R</variation>
    <location>
        <position position="119"/>
    </location>
</feature>
<protein>
    <recommendedName>
        <fullName>High-affinity nitrate transporter 2.1</fullName>
        <shortName>AtNRT2:1</shortName>
    </recommendedName>
    <alternativeName>
        <fullName>Protein ACH1</fullName>
    </alternativeName>
    <alternativeName>
        <fullName>Protein LATERAL ROOT INITIATION 1</fullName>
    </alternativeName>
</protein>
<gene>
    <name type="primary">NRT2.1</name>
    <name type="synonym">ACH1</name>
    <name type="synonym">LIN1</name>
    <name type="synonym">NRT2;1AT</name>
    <name type="ordered locus">At1g08090</name>
    <name type="ORF">T6D22.17</name>
</gene>
<evidence type="ECO:0000250" key="1">
    <source>
        <dbReference type="UniProtKB" id="Q9LXH0"/>
    </source>
</evidence>
<evidence type="ECO:0000255" key="2"/>
<evidence type="ECO:0000256" key="3">
    <source>
        <dbReference type="SAM" id="MobiDB-lite"/>
    </source>
</evidence>
<evidence type="ECO:0000269" key="4">
    <source>
    </source>
</evidence>
<evidence type="ECO:0000269" key="5">
    <source>
    </source>
</evidence>
<evidence type="ECO:0000269" key="6">
    <source>
    </source>
</evidence>
<evidence type="ECO:0000269" key="7">
    <source>
    </source>
</evidence>
<evidence type="ECO:0000269" key="8">
    <source>
    </source>
</evidence>
<evidence type="ECO:0000269" key="9">
    <source>
    </source>
</evidence>
<evidence type="ECO:0000269" key="10">
    <source>
    </source>
</evidence>
<evidence type="ECO:0000269" key="11">
    <source>
    </source>
</evidence>
<evidence type="ECO:0000269" key="12">
    <source>
    </source>
</evidence>
<evidence type="ECO:0000269" key="13">
    <source>
    </source>
</evidence>
<evidence type="ECO:0000269" key="14">
    <source>
    </source>
</evidence>
<evidence type="ECO:0000269" key="15">
    <source>
    </source>
</evidence>
<evidence type="ECO:0000269" key="16">
    <source>
    </source>
</evidence>
<evidence type="ECO:0000269" key="17">
    <source>
    </source>
</evidence>
<evidence type="ECO:0000269" key="18">
    <source>
    </source>
</evidence>
<evidence type="ECO:0000269" key="19">
    <source>
    </source>
</evidence>
<evidence type="ECO:0000269" key="20">
    <source>
    </source>
</evidence>
<evidence type="ECO:0000305" key="21"/>
<organism>
    <name type="scientific">Arabidopsis thaliana</name>
    <name type="common">Mouse-ear cress</name>
    <dbReference type="NCBI Taxonomy" id="3702"/>
    <lineage>
        <taxon>Eukaryota</taxon>
        <taxon>Viridiplantae</taxon>
        <taxon>Streptophyta</taxon>
        <taxon>Embryophyta</taxon>
        <taxon>Tracheophyta</taxon>
        <taxon>Spermatophyta</taxon>
        <taxon>Magnoliopsida</taxon>
        <taxon>eudicotyledons</taxon>
        <taxon>Gunneridae</taxon>
        <taxon>Pentapetalae</taxon>
        <taxon>rosids</taxon>
        <taxon>malvids</taxon>
        <taxon>Brassicales</taxon>
        <taxon>Brassicaceae</taxon>
        <taxon>Camelineae</taxon>
        <taxon>Arabidopsis</taxon>
    </lineage>
</organism>
<comment type="function">
    <text evidence="7 9 10 11 14 19">Involved in nitrate transport, but does not seem to be able to mediate transport by its own. Acts as a dual component transporter with NTR3.1. Acts as a repressor of lateral root initiation under high sucrose/low nitrate conditions.</text>
</comment>
<comment type="subunit">
    <text evidence="13 20">Monomer. Heterotetramer composed of two NRT2.1 and two NRT3.1. Interacts with NRT3.1.</text>
</comment>
<comment type="subcellular location">
    <subcellularLocation>
        <location evidence="16 17 19 20">Cell membrane</location>
        <topology evidence="16 17 19 20">Multi-pass membrane protein</topology>
    </subcellularLocation>
</comment>
<comment type="tissue specificity">
    <text evidence="4 11 15 16">Root cortical and epidermal cells. Not expressed in new lateral root Primordia. Detected in shoots.</text>
</comment>
<comment type="induction">
    <text evidence="4 5 8 9 12 13 16 18">Up-regulated at transcript level by light and sucrose, and transiently by nitrate, but no changes at protein level. Down-regulated by ammonium, amino acids and N-metabolites resulting from nitrate reduction. Induced by sudden N starvation and by growth on low nitrate concentration. Circadian-regulation. Expression increases during the light phase and decreases during the dark phase.</text>
</comment>
<comment type="PTM">
    <text>Might be subject to partial proteolysis at the C-terminus.</text>
</comment>
<comment type="disruption phenotype">
    <text evidence="6 10 14">Impaired in the high-affinity nitrate transport. Reduced growth on low-nitrate media. Reduced nitrate uptake and increased lateral root initiation.</text>
</comment>
<comment type="similarity">
    <text evidence="21">Belongs to the major facilitator superfamily. Nitrate/nitrite porter (TC 2.A.1.8) family.</text>
</comment>
<dbReference type="EMBL" id="Z97058">
    <property type="protein sequence ID" value="CAB09794.1"/>
    <property type="molecule type" value="mRNA"/>
</dbReference>
<dbReference type="EMBL" id="AF019748">
    <property type="protein sequence ID" value="AAC35883.1"/>
    <property type="molecule type" value="mRNA"/>
</dbReference>
<dbReference type="EMBL" id="AF093754">
    <property type="protein sequence ID" value="AAC64170.1"/>
    <property type="molecule type" value="mRNA"/>
</dbReference>
<dbReference type="EMBL" id="AC026875">
    <property type="protein sequence ID" value="AAF79826.1"/>
    <property type="molecule type" value="Genomic_DNA"/>
</dbReference>
<dbReference type="EMBL" id="CP002684">
    <property type="protein sequence ID" value="AEE28241.1"/>
    <property type="molecule type" value="Genomic_DNA"/>
</dbReference>
<dbReference type="PIR" id="T51836">
    <property type="entry name" value="T51836"/>
</dbReference>
<dbReference type="RefSeq" id="NP_172288.1">
    <property type="nucleotide sequence ID" value="NM_100684.3"/>
</dbReference>
<dbReference type="SMR" id="O82811"/>
<dbReference type="BioGRID" id="22568">
    <property type="interactions" value="1"/>
</dbReference>
<dbReference type="FunCoup" id="O82811">
    <property type="interactions" value="591"/>
</dbReference>
<dbReference type="IntAct" id="O82811">
    <property type="interactions" value="1"/>
</dbReference>
<dbReference type="STRING" id="3702.O82811"/>
<dbReference type="TCDB" id="2.A.1.8.12">
    <property type="family name" value="the major facilitator superfamily (mfs)"/>
</dbReference>
<dbReference type="iPTMnet" id="O82811"/>
<dbReference type="PaxDb" id="3702-AT1G08090.1"/>
<dbReference type="ProteomicsDB" id="249052"/>
<dbReference type="EnsemblPlants" id="AT1G08090.1">
    <property type="protein sequence ID" value="AT1G08090.1"/>
    <property type="gene ID" value="AT1G08090"/>
</dbReference>
<dbReference type="GeneID" id="837327"/>
<dbReference type="Gramene" id="AT1G08090.1">
    <property type="protein sequence ID" value="AT1G08090.1"/>
    <property type="gene ID" value="AT1G08090"/>
</dbReference>
<dbReference type="KEGG" id="ath:AT1G08090"/>
<dbReference type="Araport" id="AT1G08090"/>
<dbReference type="TAIR" id="AT1G08090">
    <property type="gene designation" value="NRT2:1"/>
</dbReference>
<dbReference type="eggNOG" id="ENOG502QPIC">
    <property type="taxonomic scope" value="Eukaryota"/>
</dbReference>
<dbReference type="HOGENOM" id="CLU_024204_0_0_1"/>
<dbReference type="InParanoid" id="O82811"/>
<dbReference type="OMA" id="IPCFMFA"/>
<dbReference type="OrthoDB" id="434240at2759"/>
<dbReference type="PhylomeDB" id="O82811"/>
<dbReference type="PRO" id="PR:O82811"/>
<dbReference type="Proteomes" id="UP000006548">
    <property type="component" value="Chromosome 1"/>
</dbReference>
<dbReference type="ExpressionAtlas" id="O82811">
    <property type="expression patterns" value="baseline and differential"/>
</dbReference>
<dbReference type="GO" id="GO:0016020">
    <property type="term" value="C:membrane"/>
    <property type="evidence" value="ECO:0000250"/>
    <property type="project" value="TAIR"/>
</dbReference>
<dbReference type="GO" id="GO:0005886">
    <property type="term" value="C:plasma membrane"/>
    <property type="evidence" value="ECO:0000314"/>
    <property type="project" value="TAIR"/>
</dbReference>
<dbReference type="GO" id="GO:0015112">
    <property type="term" value="F:nitrate transmembrane transporter activity"/>
    <property type="evidence" value="ECO:0000304"/>
    <property type="project" value="TAIR"/>
</dbReference>
<dbReference type="GO" id="GO:0048527">
    <property type="term" value="P:lateral root development"/>
    <property type="evidence" value="ECO:0000315"/>
    <property type="project" value="TAIR"/>
</dbReference>
<dbReference type="GO" id="GO:0042128">
    <property type="term" value="P:nitrate assimilation"/>
    <property type="evidence" value="ECO:0007669"/>
    <property type="project" value="UniProtKB-KW"/>
</dbReference>
<dbReference type="GO" id="GO:0015706">
    <property type="term" value="P:nitrate transmembrane transport"/>
    <property type="evidence" value="ECO:0000315"/>
    <property type="project" value="CACAO"/>
</dbReference>
<dbReference type="GO" id="GO:0010167">
    <property type="term" value="P:response to nitrate"/>
    <property type="evidence" value="ECO:0000270"/>
    <property type="project" value="TAIR"/>
</dbReference>
<dbReference type="CDD" id="cd17341">
    <property type="entry name" value="MFS_NRT2_like"/>
    <property type="match status" value="1"/>
</dbReference>
<dbReference type="FunFam" id="1.20.1250.20:FF:000048">
    <property type="entry name" value="High affinity nitrate transporter"/>
    <property type="match status" value="1"/>
</dbReference>
<dbReference type="FunFam" id="1.20.1250.20:FF:000053">
    <property type="entry name" value="Nitrate transporter 2.1"/>
    <property type="match status" value="1"/>
</dbReference>
<dbReference type="Gene3D" id="1.20.1250.20">
    <property type="entry name" value="MFS general substrate transporter like domains"/>
    <property type="match status" value="2"/>
</dbReference>
<dbReference type="InterPro" id="IPR011701">
    <property type="entry name" value="MFS"/>
</dbReference>
<dbReference type="InterPro" id="IPR036259">
    <property type="entry name" value="MFS_trans_sf"/>
</dbReference>
<dbReference type="InterPro" id="IPR044772">
    <property type="entry name" value="NO3_transporter"/>
</dbReference>
<dbReference type="PANTHER" id="PTHR23515">
    <property type="entry name" value="HIGH-AFFINITY NITRATE TRANSPORTER 2.3"/>
    <property type="match status" value="1"/>
</dbReference>
<dbReference type="Pfam" id="PF07690">
    <property type="entry name" value="MFS_1"/>
    <property type="match status" value="1"/>
</dbReference>
<dbReference type="SUPFAM" id="SSF103473">
    <property type="entry name" value="MFS general substrate transporter"/>
    <property type="match status" value="1"/>
</dbReference>